<comment type="function">
    <text evidence="1">Activates acetate so that it can be used for lipid synthesis or for energy generation.</text>
</comment>
<comment type="catalytic activity">
    <reaction evidence="1">
        <text>acetate + ATP + CoA = acetyl-CoA + AMP + diphosphate</text>
        <dbReference type="Rhea" id="RHEA:23176"/>
        <dbReference type="ChEBI" id="CHEBI:30089"/>
        <dbReference type="ChEBI" id="CHEBI:30616"/>
        <dbReference type="ChEBI" id="CHEBI:33019"/>
        <dbReference type="ChEBI" id="CHEBI:57287"/>
        <dbReference type="ChEBI" id="CHEBI:57288"/>
        <dbReference type="ChEBI" id="CHEBI:456215"/>
        <dbReference type="EC" id="6.2.1.1"/>
    </reaction>
</comment>
<comment type="subcellular location">
    <subcellularLocation>
        <location>Cytoplasm</location>
    </subcellularLocation>
</comment>
<comment type="alternative products">
    <event type="alternative splicing"/>
    <isoform>
        <id>Q9VP61-1</id>
        <name evidence="5">A</name>
        <sequence type="displayed"/>
    </isoform>
    <isoform>
        <id>Q9VP61-2</id>
        <name evidence="5">B</name>
        <sequence type="described" ref="VSP_008310"/>
    </isoform>
</comment>
<comment type="similarity">
    <text evidence="5">Belongs to the ATP-dependent AMP-binding enzyme family.</text>
</comment>
<keyword id="KW-0025">Alternative splicing</keyword>
<keyword id="KW-0067">ATP-binding</keyword>
<keyword id="KW-0963">Cytoplasm</keyword>
<keyword id="KW-0436">Ligase</keyword>
<keyword id="KW-0547">Nucleotide-binding</keyword>
<keyword id="KW-1185">Reference proteome</keyword>
<dbReference type="EC" id="6.2.1.1"/>
<dbReference type="EMBL" id="Z46786">
    <property type="protein sequence ID" value="CAA86738.1"/>
    <property type="status" value="ALT_SEQ"/>
    <property type="molecule type" value="mRNA"/>
</dbReference>
<dbReference type="EMBL" id="AE014296">
    <property type="protein sequence ID" value="AAF51695.2"/>
    <property type="molecule type" value="Genomic_DNA"/>
</dbReference>
<dbReference type="EMBL" id="AE014296">
    <property type="protein sequence ID" value="AAF51696.3"/>
    <property type="molecule type" value="Genomic_DNA"/>
</dbReference>
<dbReference type="EMBL" id="AY089540">
    <property type="protein sequence ID" value="AAL90278.1"/>
    <property type="molecule type" value="mRNA"/>
</dbReference>
<dbReference type="EMBL" id="BT001456">
    <property type="protein sequence ID" value="AAN71211.1"/>
    <property type="molecule type" value="mRNA"/>
</dbReference>
<dbReference type="PIR" id="S52154">
    <property type="entry name" value="S52154"/>
</dbReference>
<dbReference type="RefSeq" id="NP_001014599.2">
    <property type="nucleotide sequence ID" value="NM_001014599.2"/>
</dbReference>
<dbReference type="RefSeq" id="NP_524196.2">
    <property type="nucleotide sequence ID" value="NM_079472.3"/>
</dbReference>
<dbReference type="RefSeq" id="NP_730611.1">
    <property type="nucleotide sequence ID" value="NM_168894.3"/>
</dbReference>
<dbReference type="SMR" id="Q9VP61"/>
<dbReference type="BioGRID" id="65596">
    <property type="interactions" value="5"/>
</dbReference>
<dbReference type="FunCoup" id="Q9VP61">
    <property type="interactions" value="1149"/>
</dbReference>
<dbReference type="STRING" id="7227.FBpp0078067"/>
<dbReference type="PaxDb" id="7227-FBpp0078067"/>
<dbReference type="GeneID" id="40348"/>
<dbReference type="KEGG" id="dme:Dmel_CG9390"/>
<dbReference type="AGR" id="FB:FBgn0012034"/>
<dbReference type="CTD" id="40348"/>
<dbReference type="FlyBase" id="FBgn0012034">
    <property type="gene designation" value="AcCoAS"/>
</dbReference>
<dbReference type="VEuPathDB" id="VectorBase:FBgn0012034"/>
<dbReference type="eggNOG" id="KOG1175">
    <property type="taxonomic scope" value="Eukaryota"/>
</dbReference>
<dbReference type="InParanoid" id="Q9VP61"/>
<dbReference type="OrthoDB" id="1706066at2759"/>
<dbReference type="PhylomeDB" id="Q9VP61"/>
<dbReference type="Reactome" id="R-DME-71384">
    <property type="pathway name" value="Ethanol oxidation"/>
</dbReference>
<dbReference type="BioGRID-ORCS" id="40348">
    <property type="hits" value="0 hits in 3 CRISPR screens"/>
</dbReference>
<dbReference type="GenomeRNAi" id="40348"/>
<dbReference type="PRO" id="PR:Q9VP61"/>
<dbReference type="Proteomes" id="UP000000803">
    <property type="component" value="Chromosome 3L"/>
</dbReference>
<dbReference type="ExpressionAtlas" id="Q9VP61">
    <property type="expression patterns" value="baseline and differential"/>
</dbReference>
<dbReference type="GO" id="GO:0005737">
    <property type="term" value="C:cytoplasm"/>
    <property type="evidence" value="ECO:0007669"/>
    <property type="project" value="UniProtKB-SubCell"/>
</dbReference>
<dbReference type="GO" id="GO:0003987">
    <property type="term" value="F:acetate-CoA ligase activity"/>
    <property type="evidence" value="ECO:0000318"/>
    <property type="project" value="GO_Central"/>
</dbReference>
<dbReference type="GO" id="GO:0016208">
    <property type="term" value="F:AMP binding"/>
    <property type="evidence" value="ECO:0007669"/>
    <property type="project" value="InterPro"/>
</dbReference>
<dbReference type="GO" id="GO:0005524">
    <property type="term" value="F:ATP binding"/>
    <property type="evidence" value="ECO:0007669"/>
    <property type="project" value="UniProtKB-KW"/>
</dbReference>
<dbReference type="GO" id="GO:0006085">
    <property type="term" value="P:acetyl-CoA biosynthetic process"/>
    <property type="evidence" value="ECO:0000318"/>
    <property type="project" value="GO_Central"/>
</dbReference>
<dbReference type="GO" id="GO:0019427">
    <property type="term" value="P:acetyl-CoA biosynthetic process from acetate"/>
    <property type="evidence" value="ECO:0007669"/>
    <property type="project" value="InterPro"/>
</dbReference>
<dbReference type="GO" id="GO:0048149">
    <property type="term" value="P:behavioral response to ethanol"/>
    <property type="evidence" value="ECO:0000315"/>
    <property type="project" value="FlyBase"/>
</dbReference>
<dbReference type="GO" id="GO:0045494">
    <property type="term" value="P:photoreceptor cell maintenance"/>
    <property type="evidence" value="ECO:0000316"/>
    <property type="project" value="FlyBase"/>
</dbReference>
<dbReference type="CDD" id="cd05966">
    <property type="entry name" value="ACS"/>
    <property type="match status" value="1"/>
</dbReference>
<dbReference type="FunFam" id="3.30.300.30:FF:000004">
    <property type="entry name" value="Acetyl-coenzyme A synthetase"/>
    <property type="match status" value="1"/>
</dbReference>
<dbReference type="FunFam" id="3.40.50.12780:FF:000001">
    <property type="entry name" value="Acetyl-coenzyme A synthetase"/>
    <property type="match status" value="1"/>
</dbReference>
<dbReference type="Gene3D" id="3.30.300.30">
    <property type="match status" value="1"/>
</dbReference>
<dbReference type="Gene3D" id="3.40.50.12780">
    <property type="entry name" value="N-terminal domain of ligase-like"/>
    <property type="match status" value="1"/>
</dbReference>
<dbReference type="InterPro" id="IPR011904">
    <property type="entry name" value="Ac_CoA_lig"/>
</dbReference>
<dbReference type="InterPro" id="IPR032387">
    <property type="entry name" value="ACAS_N"/>
</dbReference>
<dbReference type="InterPro" id="IPR025110">
    <property type="entry name" value="AMP-bd_C"/>
</dbReference>
<dbReference type="InterPro" id="IPR045851">
    <property type="entry name" value="AMP-bd_C_sf"/>
</dbReference>
<dbReference type="InterPro" id="IPR020845">
    <property type="entry name" value="AMP-binding_CS"/>
</dbReference>
<dbReference type="InterPro" id="IPR000873">
    <property type="entry name" value="AMP-dep_synth/lig_dom"/>
</dbReference>
<dbReference type="InterPro" id="IPR042099">
    <property type="entry name" value="ANL_N_sf"/>
</dbReference>
<dbReference type="NCBIfam" id="TIGR02188">
    <property type="entry name" value="Ac_CoA_lig_AcsA"/>
    <property type="match status" value="1"/>
</dbReference>
<dbReference type="NCBIfam" id="NF001208">
    <property type="entry name" value="PRK00174.1"/>
    <property type="match status" value="1"/>
</dbReference>
<dbReference type="PANTHER" id="PTHR24095">
    <property type="entry name" value="ACETYL-COENZYME A SYNTHETASE"/>
    <property type="match status" value="1"/>
</dbReference>
<dbReference type="PANTHER" id="PTHR24095:SF244">
    <property type="entry name" value="ACETYL-COENZYME A SYNTHETASE"/>
    <property type="match status" value="1"/>
</dbReference>
<dbReference type="Pfam" id="PF16177">
    <property type="entry name" value="ACAS_N"/>
    <property type="match status" value="1"/>
</dbReference>
<dbReference type="Pfam" id="PF00501">
    <property type="entry name" value="AMP-binding"/>
    <property type="match status" value="1"/>
</dbReference>
<dbReference type="Pfam" id="PF13193">
    <property type="entry name" value="AMP-binding_C"/>
    <property type="match status" value="1"/>
</dbReference>
<dbReference type="SUPFAM" id="SSF56801">
    <property type="entry name" value="Acetyl-CoA synthetase-like"/>
    <property type="match status" value="1"/>
</dbReference>
<dbReference type="PROSITE" id="PS00455">
    <property type="entry name" value="AMP_BINDING"/>
    <property type="match status" value="1"/>
</dbReference>
<feature type="chain" id="PRO_0000208425" description="Acetyl-coenzyme A synthetase">
    <location>
        <begin position="1"/>
        <end position="670"/>
    </location>
</feature>
<feature type="splice variant" id="VSP_008310" description="In isoform B." evidence="4">
    <location>
        <begin position="1"/>
        <end position="146"/>
    </location>
</feature>
<feature type="sequence conflict" description="In Ref. 1; CAA86738." evidence="5" ref="1">
    <original>C</original>
    <variation>S</variation>
    <location>
        <position position="227"/>
    </location>
</feature>
<feature type="sequence conflict" description="In Ref. 2; AAF51695/AAF51696." evidence="5" ref="2">
    <original>A</original>
    <variation>G</variation>
    <location>
        <position position="326"/>
    </location>
</feature>
<proteinExistence type="evidence at transcript level"/>
<evidence type="ECO:0000250" key="1">
    <source>
        <dbReference type="UniProtKB" id="Q9NR19"/>
    </source>
</evidence>
<evidence type="ECO:0000269" key="2">
    <source>
    </source>
</evidence>
<evidence type="ECO:0000269" key="3">
    <source>
    </source>
</evidence>
<evidence type="ECO:0000303" key="4">
    <source>
    </source>
</evidence>
<evidence type="ECO:0000305" key="5"/>
<evidence type="ECO:0000312" key="6">
    <source>
        <dbReference type="EMBL" id="AAL90278.1"/>
    </source>
</evidence>
<sequence length="670" mass="75960">MPAEKSIYDPNPAISQNAYISSFEEYQKFYQESLDNPAEFWSRVAKQFHWETPADQDKFLKYNFNISKGPISIKWMEGASTNLCYNLLDRNVRNGLGDQIAYYWEGNHPDDYSRGLTYRKLLEEVCRFANVLKDHGIRKGDRVSIYMPMILELPIAMLACARIGAVHSIVFAGFSPDSLAERMFDCKAKLLITADGAWRGEKPLYLKALCDTALEKVEEMGHSVEKCIVVSHLKRVTPCQPDHVEEEIPWTDDRDYWWHEEMEDKEPACYPEWMDAEDPLFMLYTSGSTGKPKGVLHTTAGYLLYAATTFKIVFDYKPGDIYWCTADVGWITGHTYVVYGPLANGATSVIFEGTPFFPGNDRYWSVIDKYKVTQFYTAPTAIRALMKFGEGPVLKHNLSGLKVLGSVGEPINPEAWLWYYKYIGKEQCSIVDTFWQTETGGHVITPLPGATPMKPGSASFPFFGVKPTLLDECGIEIKGEGEGYLVFSQPWPGMMRTLYNNHERFEDTYFSKFPGYYCTGDGARRDADGYLWITGRVDDMLNVSGHLMSTAEVESVLTEHPRVAESAVVSRPHPVKGECLYCFITPNENEVFDQKLISDLKKMVRERIGPFAMPDVIQNAPGLPKTRSGKIMRRVLRKIAVNDRNVGDTSTLADEQIVEQLFANRPVEAK</sequence>
<reference evidence="5" key="1">
    <citation type="submission" date="1994-11" db="EMBL/GenBank/DDBJ databases">
        <title>A Drosophila melanogaster acetyl-CoA-synthetase gene.</title>
        <authorList>
            <person name="Russell S.R."/>
            <person name="Heimbeck G.M."/>
            <person name="Carpenter A.T."/>
            <person name="Ashburner M."/>
        </authorList>
    </citation>
    <scope>NUCLEOTIDE SEQUENCE (ISOFORM B)</scope>
</reference>
<reference key="2">
    <citation type="journal article" date="2000" name="Science">
        <title>The genome sequence of Drosophila melanogaster.</title>
        <authorList>
            <person name="Adams M.D."/>
            <person name="Celniker S.E."/>
            <person name="Holt R.A."/>
            <person name="Evans C.A."/>
            <person name="Gocayne J.D."/>
            <person name="Amanatides P.G."/>
            <person name="Scherer S.E."/>
            <person name="Li P.W."/>
            <person name="Hoskins R.A."/>
            <person name="Galle R.F."/>
            <person name="George R.A."/>
            <person name="Lewis S.E."/>
            <person name="Richards S."/>
            <person name="Ashburner M."/>
            <person name="Henderson S.N."/>
            <person name="Sutton G.G."/>
            <person name="Wortman J.R."/>
            <person name="Yandell M.D."/>
            <person name="Zhang Q."/>
            <person name="Chen L.X."/>
            <person name="Brandon R.C."/>
            <person name="Rogers Y.-H.C."/>
            <person name="Blazej R.G."/>
            <person name="Champe M."/>
            <person name="Pfeiffer B.D."/>
            <person name="Wan K.H."/>
            <person name="Doyle C."/>
            <person name="Baxter E.G."/>
            <person name="Helt G."/>
            <person name="Nelson C.R."/>
            <person name="Miklos G.L.G."/>
            <person name="Abril J.F."/>
            <person name="Agbayani A."/>
            <person name="An H.-J."/>
            <person name="Andrews-Pfannkoch C."/>
            <person name="Baldwin D."/>
            <person name="Ballew R.M."/>
            <person name="Basu A."/>
            <person name="Baxendale J."/>
            <person name="Bayraktaroglu L."/>
            <person name="Beasley E.M."/>
            <person name="Beeson K.Y."/>
            <person name="Benos P.V."/>
            <person name="Berman B.P."/>
            <person name="Bhandari D."/>
            <person name="Bolshakov S."/>
            <person name="Borkova D."/>
            <person name="Botchan M.R."/>
            <person name="Bouck J."/>
            <person name="Brokstein P."/>
            <person name="Brottier P."/>
            <person name="Burtis K.C."/>
            <person name="Busam D.A."/>
            <person name="Butler H."/>
            <person name="Cadieu E."/>
            <person name="Center A."/>
            <person name="Chandra I."/>
            <person name="Cherry J.M."/>
            <person name="Cawley S."/>
            <person name="Dahlke C."/>
            <person name="Davenport L.B."/>
            <person name="Davies P."/>
            <person name="de Pablos B."/>
            <person name="Delcher A."/>
            <person name="Deng Z."/>
            <person name="Mays A.D."/>
            <person name="Dew I."/>
            <person name="Dietz S.M."/>
            <person name="Dodson K."/>
            <person name="Doup L.E."/>
            <person name="Downes M."/>
            <person name="Dugan-Rocha S."/>
            <person name="Dunkov B.C."/>
            <person name="Dunn P."/>
            <person name="Durbin K.J."/>
            <person name="Evangelista C.C."/>
            <person name="Ferraz C."/>
            <person name="Ferriera S."/>
            <person name="Fleischmann W."/>
            <person name="Fosler C."/>
            <person name="Gabrielian A.E."/>
            <person name="Garg N.S."/>
            <person name="Gelbart W.M."/>
            <person name="Glasser K."/>
            <person name="Glodek A."/>
            <person name="Gong F."/>
            <person name="Gorrell J.H."/>
            <person name="Gu Z."/>
            <person name="Guan P."/>
            <person name="Harris M."/>
            <person name="Harris N.L."/>
            <person name="Harvey D.A."/>
            <person name="Heiman T.J."/>
            <person name="Hernandez J.R."/>
            <person name="Houck J."/>
            <person name="Hostin D."/>
            <person name="Houston K.A."/>
            <person name="Howland T.J."/>
            <person name="Wei M.-H."/>
            <person name="Ibegwam C."/>
            <person name="Jalali M."/>
            <person name="Kalush F."/>
            <person name="Karpen G.H."/>
            <person name="Ke Z."/>
            <person name="Kennison J.A."/>
            <person name="Ketchum K.A."/>
            <person name="Kimmel B.E."/>
            <person name="Kodira C.D."/>
            <person name="Kraft C.L."/>
            <person name="Kravitz S."/>
            <person name="Kulp D."/>
            <person name="Lai Z."/>
            <person name="Lasko P."/>
            <person name="Lei Y."/>
            <person name="Levitsky A.A."/>
            <person name="Li J.H."/>
            <person name="Li Z."/>
            <person name="Liang Y."/>
            <person name="Lin X."/>
            <person name="Liu X."/>
            <person name="Mattei B."/>
            <person name="McIntosh T.C."/>
            <person name="McLeod M.P."/>
            <person name="McPherson D."/>
            <person name="Merkulov G."/>
            <person name="Milshina N.V."/>
            <person name="Mobarry C."/>
            <person name="Morris J."/>
            <person name="Moshrefi A."/>
            <person name="Mount S.M."/>
            <person name="Moy M."/>
            <person name="Murphy B."/>
            <person name="Murphy L."/>
            <person name="Muzny D.M."/>
            <person name="Nelson D.L."/>
            <person name="Nelson D.R."/>
            <person name="Nelson K.A."/>
            <person name="Nixon K."/>
            <person name="Nusskern D.R."/>
            <person name="Pacleb J.M."/>
            <person name="Palazzolo M."/>
            <person name="Pittman G.S."/>
            <person name="Pan S."/>
            <person name="Pollard J."/>
            <person name="Puri V."/>
            <person name="Reese M.G."/>
            <person name="Reinert K."/>
            <person name="Remington K."/>
            <person name="Saunders R.D.C."/>
            <person name="Scheeler F."/>
            <person name="Shen H."/>
            <person name="Shue B.C."/>
            <person name="Siden-Kiamos I."/>
            <person name="Simpson M."/>
            <person name="Skupski M.P."/>
            <person name="Smith T.J."/>
            <person name="Spier E."/>
            <person name="Spradling A.C."/>
            <person name="Stapleton M."/>
            <person name="Strong R."/>
            <person name="Sun E."/>
            <person name="Svirskas R."/>
            <person name="Tector C."/>
            <person name="Turner R."/>
            <person name="Venter E."/>
            <person name="Wang A.H."/>
            <person name="Wang X."/>
            <person name="Wang Z.-Y."/>
            <person name="Wassarman D.A."/>
            <person name="Weinstock G.M."/>
            <person name="Weissenbach J."/>
            <person name="Williams S.M."/>
            <person name="Woodage T."/>
            <person name="Worley K.C."/>
            <person name="Wu D."/>
            <person name="Yang S."/>
            <person name="Yao Q.A."/>
            <person name="Ye J."/>
            <person name="Yeh R.-F."/>
            <person name="Zaveri J.S."/>
            <person name="Zhan M."/>
            <person name="Zhang G."/>
            <person name="Zhao Q."/>
            <person name="Zheng L."/>
            <person name="Zheng X.H."/>
            <person name="Zhong F.N."/>
            <person name="Zhong W."/>
            <person name="Zhou X."/>
            <person name="Zhu S.C."/>
            <person name="Zhu X."/>
            <person name="Smith H.O."/>
            <person name="Gibbs R.A."/>
            <person name="Myers E.W."/>
            <person name="Rubin G.M."/>
            <person name="Venter J.C."/>
        </authorList>
    </citation>
    <scope>NUCLEOTIDE SEQUENCE [LARGE SCALE GENOMIC DNA]</scope>
    <source>
        <strain evidence="2">Berkeley</strain>
    </source>
</reference>
<reference evidence="5" key="3">
    <citation type="journal article" date="2002" name="Genome Biol.">
        <title>Annotation of the Drosophila melanogaster euchromatic genome: a systematic review.</title>
        <authorList>
            <person name="Misra S."/>
            <person name="Crosby M.A."/>
            <person name="Mungall C.J."/>
            <person name="Matthews B.B."/>
            <person name="Campbell K.S."/>
            <person name="Hradecky P."/>
            <person name="Huang Y."/>
            <person name="Kaminker J.S."/>
            <person name="Millburn G.H."/>
            <person name="Prochnik S.E."/>
            <person name="Smith C.D."/>
            <person name="Tupy J.L."/>
            <person name="Whitfield E.J."/>
            <person name="Bayraktaroglu L."/>
            <person name="Berman B.P."/>
            <person name="Bettencourt B.R."/>
            <person name="Celniker S.E."/>
            <person name="de Grey A.D.N.J."/>
            <person name="Drysdale R.A."/>
            <person name="Harris N.L."/>
            <person name="Richter J."/>
            <person name="Russo S."/>
            <person name="Schroeder A.J."/>
            <person name="Shu S.Q."/>
            <person name="Stapleton M."/>
            <person name="Yamada C."/>
            <person name="Ashburner M."/>
            <person name="Gelbart W.M."/>
            <person name="Rubin G.M."/>
            <person name="Lewis S.E."/>
        </authorList>
    </citation>
    <scope>GENOME REANNOTATION</scope>
    <scope>ALTERNATIVE SPLICING</scope>
    <source>
        <strain>Berkeley</strain>
    </source>
</reference>
<reference evidence="5" key="4">
    <citation type="journal article" date="2002" name="Genome Biol.">
        <title>A Drosophila full-length cDNA resource.</title>
        <authorList>
            <person name="Stapleton M."/>
            <person name="Carlson J.W."/>
            <person name="Brokstein P."/>
            <person name="Yu C."/>
            <person name="Champe M."/>
            <person name="George R.A."/>
            <person name="Guarin H."/>
            <person name="Kronmiller B."/>
            <person name="Pacleb J.M."/>
            <person name="Park S."/>
            <person name="Wan K.H."/>
            <person name="Rubin G.M."/>
            <person name="Celniker S.E."/>
        </authorList>
    </citation>
    <scope>NUCLEOTIDE SEQUENCE [LARGE SCALE MRNA] (ISOFORMS A AND B)</scope>
    <source>
        <strain evidence="3">Berkeley</strain>
        <tissue evidence="3">Embryo</tissue>
        <tissue evidence="3">Ovary</tissue>
    </source>
</reference>
<protein>
    <recommendedName>
        <fullName>Acetyl-coenzyme A synthetase</fullName>
        <ecNumber>6.2.1.1</ecNumber>
    </recommendedName>
    <alternativeName>
        <fullName>Acetate--CoA ligase</fullName>
    </alternativeName>
    <alternativeName>
        <fullName>Acetyl-CoA synthetase</fullName>
        <shortName>ACS</shortName>
        <shortName>AceCS</shortName>
    </alternativeName>
    <alternativeName>
        <fullName>Acyl-activating enzyme</fullName>
    </alternativeName>
</protein>
<accession>Q9VP61</accession>
<accession>Q24226</accession>
<accession>Q8IH30</accession>
<accession>Q9VP60</accession>
<gene>
    <name type="primary">AcCoAS</name>
    <name type="ORF">CG9390</name>
</gene>
<organism evidence="6">
    <name type="scientific">Drosophila melanogaster</name>
    <name type="common">Fruit fly</name>
    <dbReference type="NCBI Taxonomy" id="7227"/>
    <lineage>
        <taxon>Eukaryota</taxon>
        <taxon>Metazoa</taxon>
        <taxon>Ecdysozoa</taxon>
        <taxon>Arthropoda</taxon>
        <taxon>Hexapoda</taxon>
        <taxon>Insecta</taxon>
        <taxon>Pterygota</taxon>
        <taxon>Neoptera</taxon>
        <taxon>Endopterygota</taxon>
        <taxon>Diptera</taxon>
        <taxon>Brachycera</taxon>
        <taxon>Muscomorpha</taxon>
        <taxon>Ephydroidea</taxon>
        <taxon>Drosophilidae</taxon>
        <taxon>Drosophila</taxon>
        <taxon>Sophophora</taxon>
    </lineage>
</organism>
<name>ACSA_DROME</name>